<keyword id="KW-0044">Antibiotic</keyword>
<keyword id="KW-0929">Antimicrobial</keyword>
<keyword id="KW-0165">Cleavage on pair of basic residues</keyword>
<keyword id="KW-0211">Defensin</keyword>
<keyword id="KW-0903">Direct protein sequencing</keyword>
<keyword id="KW-1015">Disulfide bond</keyword>
<keyword id="KW-0391">Immunity</keyword>
<keyword id="KW-0399">Innate immunity</keyword>
<keyword id="KW-1185">Reference proteome</keyword>
<keyword id="KW-0964">Secreted</keyword>
<keyword id="KW-0732">Signal</keyword>
<sequence>MKSITVICFLALCTVAITSAYPQEPVLADEARPFANSLFDELPEETYQAAVENFRLKRATCDLLSGFGVGDSACAAHCIARGNRGGYCNSKKVCVCRN</sequence>
<protein>
    <recommendedName>
        <fullName>Defensin-A</fullName>
    </recommendedName>
    <alternativeName>
        <fullName>AaDef</fullName>
    </alternativeName>
</protein>
<dbReference type="EMBL" id="S82860">
    <property type="protein sequence ID" value="AAB46807.1"/>
    <property type="molecule type" value="mRNA"/>
</dbReference>
<dbReference type="EMBL" id="S82861">
    <property type="protein sequence ID" value="AAB46808.2"/>
    <property type="molecule type" value="mRNA"/>
</dbReference>
<dbReference type="EMBL" id="S82862">
    <property type="protein sequence ID" value="AAB46809.2"/>
    <property type="molecule type" value="mRNA"/>
</dbReference>
<dbReference type="EMBL" id="S82863">
    <property type="protein sequence ID" value="AAB46810.2"/>
    <property type="molecule type" value="mRNA"/>
</dbReference>
<dbReference type="EMBL" id="AF156088">
    <property type="protein sequence ID" value="AAD40112.1"/>
    <property type="status" value="ALT_SEQ"/>
    <property type="molecule type" value="mRNA"/>
</dbReference>
<dbReference type="EMBL" id="AF156089">
    <property type="protein sequence ID" value="AAD40113.1"/>
    <property type="molecule type" value="mRNA"/>
</dbReference>
<dbReference type="EMBL" id="AF095259">
    <property type="protein sequence ID" value="AAC64181.1"/>
    <property type="molecule type" value="mRNA"/>
</dbReference>
<dbReference type="EMBL" id="AF387487">
    <property type="protein sequence ID" value="AAK73080.1"/>
    <property type="molecule type" value="mRNA"/>
</dbReference>
<dbReference type="EMBL" id="AF392802">
    <property type="protein sequence ID" value="AAL11701.1"/>
    <property type="molecule type" value="Genomic_DNA"/>
</dbReference>
<dbReference type="EMBL" id="AF392803">
    <property type="protein sequence ID" value="AAL11702.1"/>
    <property type="molecule type" value="Genomic_DNA"/>
</dbReference>
<dbReference type="EMBL" id="AF392804">
    <property type="protein sequence ID" value="AAL11703.1"/>
    <property type="molecule type" value="Genomic_DNA"/>
</dbReference>
<dbReference type="EMBL" id="AY625500">
    <property type="protein sequence ID" value="AAT41586.1"/>
    <property type="molecule type" value="Genomic_DNA"/>
</dbReference>
<dbReference type="EMBL" id="AY625501">
    <property type="protein sequence ID" value="AAT41587.1"/>
    <property type="molecule type" value="Genomic_DNA"/>
</dbReference>
<dbReference type="EMBL" id="CH477283">
    <property type="protein sequence ID" value="EAT44833.1"/>
    <property type="molecule type" value="Genomic_DNA"/>
</dbReference>
<dbReference type="EMBL" id="CH477283">
    <property type="protein sequence ID" value="EAT44837.1"/>
    <property type="molecule type" value="Genomic_DNA"/>
</dbReference>
<dbReference type="RefSeq" id="XP_001657289.1">
    <property type="nucleotide sequence ID" value="XM_001657239.2"/>
</dbReference>
<dbReference type="RefSeq" id="XP_001657293.1">
    <property type="nucleotide sequence ID" value="XM_001657243.2"/>
</dbReference>
<dbReference type="SMR" id="P91793"/>
<dbReference type="FunCoup" id="P91793">
    <property type="interactions" value="69"/>
</dbReference>
<dbReference type="STRING" id="7159.P91793"/>
<dbReference type="PaxDb" id="7159-AAEL003841-PA"/>
<dbReference type="EnsemblMetazoa" id="AAEL003841-RA">
    <property type="protein sequence ID" value="AAEL003841-PA"/>
    <property type="gene ID" value="AAEL003841"/>
</dbReference>
<dbReference type="EnsemblMetazoa" id="AAEL027792-RA">
    <property type="protein sequence ID" value="AAEL027792-PA"/>
    <property type="gene ID" value="AAEL027792"/>
</dbReference>
<dbReference type="GeneID" id="5579095"/>
<dbReference type="GeneID" id="5579099"/>
<dbReference type="KEGG" id="aag:5579095"/>
<dbReference type="KEGG" id="aag:5579099"/>
<dbReference type="VEuPathDB" id="VectorBase:AAEL003841"/>
<dbReference type="VEuPathDB" id="VectorBase:AAEL027792"/>
<dbReference type="eggNOG" id="ENOG502SD3P">
    <property type="taxonomic scope" value="Eukaryota"/>
</dbReference>
<dbReference type="HOGENOM" id="CLU_174272_0_0_1"/>
<dbReference type="InParanoid" id="P91793"/>
<dbReference type="OMA" id="CATIICA"/>
<dbReference type="OrthoDB" id="10038290at2759"/>
<dbReference type="PhylomeDB" id="P91793"/>
<dbReference type="Proteomes" id="UP000008820">
    <property type="component" value="Chromosome 3"/>
</dbReference>
<dbReference type="Proteomes" id="UP000008820">
    <property type="component" value="Unassembled WGS sequence"/>
</dbReference>
<dbReference type="Proteomes" id="UP000682892">
    <property type="component" value="Unassembled WGS sequence"/>
</dbReference>
<dbReference type="GO" id="GO:0005576">
    <property type="term" value="C:extracellular region"/>
    <property type="evidence" value="ECO:0000314"/>
    <property type="project" value="UniProtKB"/>
</dbReference>
<dbReference type="GO" id="GO:0005615">
    <property type="term" value="C:extracellular space"/>
    <property type="evidence" value="ECO:0007669"/>
    <property type="project" value="TreeGrafter"/>
</dbReference>
<dbReference type="GO" id="GO:0042742">
    <property type="term" value="P:defense response to bacterium"/>
    <property type="evidence" value="ECO:0000314"/>
    <property type="project" value="UniProtKB"/>
</dbReference>
<dbReference type="GO" id="GO:0050829">
    <property type="term" value="P:defense response to Gram-negative bacterium"/>
    <property type="evidence" value="ECO:0000314"/>
    <property type="project" value="UniProtKB"/>
</dbReference>
<dbReference type="GO" id="GO:0050830">
    <property type="term" value="P:defense response to Gram-positive bacterium"/>
    <property type="evidence" value="ECO:0000314"/>
    <property type="project" value="UniProtKB"/>
</dbReference>
<dbReference type="GO" id="GO:0006959">
    <property type="term" value="P:humoral immune response"/>
    <property type="evidence" value="ECO:0007669"/>
    <property type="project" value="TreeGrafter"/>
</dbReference>
<dbReference type="GO" id="GO:0045087">
    <property type="term" value="P:innate immune response"/>
    <property type="evidence" value="ECO:0000314"/>
    <property type="project" value="UniProtKB"/>
</dbReference>
<dbReference type="CDD" id="cd21806">
    <property type="entry name" value="DEFL_defensin-like"/>
    <property type="match status" value="1"/>
</dbReference>
<dbReference type="FunFam" id="3.30.30.10:FF:000005">
    <property type="entry name" value="Defensin"/>
    <property type="match status" value="1"/>
</dbReference>
<dbReference type="Gene3D" id="3.30.30.10">
    <property type="entry name" value="Knottin, scorpion toxin-like"/>
    <property type="match status" value="1"/>
</dbReference>
<dbReference type="InterPro" id="IPR001542">
    <property type="entry name" value="Defensin_invertebrate/fungal"/>
</dbReference>
<dbReference type="InterPro" id="IPR036574">
    <property type="entry name" value="Scorpion_toxin-like_sf"/>
</dbReference>
<dbReference type="PANTHER" id="PTHR13645">
    <property type="entry name" value="DEFENSIN"/>
    <property type="match status" value="1"/>
</dbReference>
<dbReference type="PANTHER" id="PTHR13645:SF0">
    <property type="entry name" value="DEFENSIN"/>
    <property type="match status" value="1"/>
</dbReference>
<dbReference type="Pfam" id="PF01097">
    <property type="entry name" value="Defensin_2"/>
    <property type="match status" value="1"/>
</dbReference>
<dbReference type="SUPFAM" id="SSF57095">
    <property type="entry name" value="Scorpion toxin-like"/>
    <property type="match status" value="1"/>
</dbReference>
<dbReference type="PROSITE" id="PS51378">
    <property type="entry name" value="INVERT_DEFENSINS"/>
    <property type="match status" value="1"/>
</dbReference>
<proteinExistence type="evidence at protein level"/>
<feature type="signal peptide" evidence="1">
    <location>
        <begin position="1"/>
        <end position="18"/>
    </location>
</feature>
<feature type="propeptide" id="PRO_0000006734" evidence="3 4">
    <location>
        <begin position="19"/>
        <end position="58"/>
    </location>
</feature>
<feature type="chain" id="PRO_0000006735" description="Defensin-A">
    <location>
        <begin position="59"/>
        <end position="98"/>
    </location>
</feature>
<feature type="disulfide bond" evidence="2">
    <location>
        <begin position="61"/>
        <end position="88"/>
    </location>
</feature>
<feature type="disulfide bond" evidence="2">
    <location>
        <begin position="74"/>
        <end position="94"/>
    </location>
</feature>
<feature type="disulfide bond" evidence="2">
    <location>
        <begin position="78"/>
        <end position="96"/>
    </location>
</feature>
<feature type="sequence variant" description="In forms A3, A4, A5 and A2 from strain Liverpool.">
    <original>K</original>
    <variation>Q</variation>
    <location>
        <position position="2"/>
    </location>
</feature>
<feature type="sequence variant" description="In form A4.">
    <original>S</original>
    <variation>P</variation>
    <location>
        <position position="3"/>
    </location>
</feature>
<feature type="sequence variant" description="In forms A2, A3, A4 and A2 from strain Liverpool.">
    <original>I</original>
    <variation>L</variation>
    <location>
        <position position="4"/>
    </location>
</feature>
<feature type="sequence variant" description="In forms A2, A3, A4, A5, B2, A1 from strain Liverpool and A2 from strain Liverpool.">
    <original>V</original>
    <variation>G</variation>
    <location>
        <position position="15"/>
    </location>
</feature>
<feature type="sequence variant" description="In form B2, A1 from strain Liverpool.">
    <original>A</original>
    <variation>S</variation>
    <location>
        <position position="16"/>
    </location>
</feature>
<feature type="sequence variant" description="In form A1 from strain Liverpool.">
    <original>E</original>
    <variation>D</variation>
    <location>
        <position position="24"/>
    </location>
</feature>
<evidence type="ECO:0000255" key="1"/>
<evidence type="ECO:0000255" key="2">
    <source>
        <dbReference type="PROSITE-ProRule" id="PRU00710"/>
    </source>
</evidence>
<evidence type="ECO:0000269" key="3">
    <source>
    </source>
</evidence>
<evidence type="ECO:0000269" key="4">
    <source>
    </source>
</evidence>
<evidence type="ECO:0000269" key="5">
    <source>
    </source>
</evidence>
<evidence type="ECO:0000269" key="6">
    <source>
    </source>
</evidence>
<organism>
    <name type="scientific">Aedes aegypti</name>
    <name type="common">Yellowfever mosquito</name>
    <name type="synonym">Culex aegypti</name>
    <dbReference type="NCBI Taxonomy" id="7159"/>
    <lineage>
        <taxon>Eukaryota</taxon>
        <taxon>Metazoa</taxon>
        <taxon>Ecdysozoa</taxon>
        <taxon>Arthropoda</taxon>
        <taxon>Hexapoda</taxon>
        <taxon>Insecta</taxon>
        <taxon>Pterygota</taxon>
        <taxon>Neoptera</taxon>
        <taxon>Endopterygota</taxon>
        <taxon>Diptera</taxon>
        <taxon>Nematocera</taxon>
        <taxon>Culicoidea</taxon>
        <taxon>Culicidae</taxon>
        <taxon>Culicinae</taxon>
        <taxon>Aedini</taxon>
        <taxon>Aedes</taxon>
        <taxon>Stegomyia</taxon>
    </lineage>
</organism>
<accession>P91793</accession>
<accession>O77250</accession>
<accession>P91794</accession>
<accession>P91795</accession>
<accession>P91796</accession>
<accession>Q17EE3</accession>
<accession>Q6ITZ2</accession>
<accession>Q963E9</accession>
<comment type="function">
    <text evidence="2 3 4 5">Antibacterial peptide mostly active against Gram-positive bacteria. Has activity against the bacteria Gram-negative E.cloacae beta12.</text>
</comment>
<comment type="subcellular location">
    <subcellularLocation>
        <location evidence="2 4 5">Secreted</location>
    </subcellularLocation>
</comment>
<comment type="developmental stage">
    <text evidence="5 6">Expressed 75 minutes after bacterial infection. Increased dramatically after 6 hours, continued to increase through to 24 hours and is maintained at high levels until at least 30 hours after bacterial infection.</text>
</comment>
<comment type="induction">
    <text evidence="3 4 5">By bacterial infection.</text>
</comment>
<comment type="mass spectrometry"/>
<comment type="polymorphism">
    <text>There are five defensin A forms, A1 (shown here) A2, A3, A4 and A5.</text>
</comment>
<comment type="similarity">
    <text evidence="2">Belongs to the invertebrate defensin family. Type 1 subfamily.</text>
</comment>
<reference key="1">
    <citation type="journal article" date="1996" name="Insect Biochem. Mol. Biol.">
        <title>Cloning and characterization of cDNAs encoding the antibacterial peptide, defensin A, from the mosquito, Aedes aegypti.</title>
        <authorList>
            <person name="Cho W.-L."/>
            <person name="Fu Y.-C."/>
            <person name="Chen C.-C."/>
            <person name="Ho C.-M."/>
        </authorList>
    </citation>
    <scope>NUCLEOTIDE SEQUENCE [MRNA]</scope>
    <scope>FUNCTION</scope>
    <scope>SUBCELLULAR LOCATION</scope>
    <scope>INDUCTION</scope>
    <scope>DEVELOPMENTAL STAGE</scope>
    <source>
        <strain>Koashiung</strain>
    </source>
</reference>
<reference key="2">
    <citation type="journal article" date="1999" name="Insect Mol. Biol.">
        <title>Insect immunity: molecular cloning, expression, and characterization of cDNAs and genomic DNA encoding three isoforms of insect defensin in Aedes aegypti.</title>
        <authorList>
            <person name="Lowenberger C.A."/>
            <person name="Smartt C.T."/>
            <person name="Bulet P."/>
            <person name="Ferdig M.T."/>
            <person name="Severson D.W."/>
            <person name="Hoffmann J.A."/>
            <person name="Christensen B.M."/>
        </authorList>
    </citation>
    <scope>NUCLEOTIDE SEQUENCE [MRNA]</scope>
    <scope>DEVELOPMENTAL STAGE</scope>
    <source>
        <strain>Liverpool</strain>
        <tissue>Fat body</tissue>
    </source>
</reference>
<reference key="3">
    <citation type="journal article" date="1999" name="Insect Mol. Biol.">
        <title>Immunity proteins from mosquito cell lines include three defensin A isoforms from Aedes aegypti and a defensin D from Aedes albopictus.</title>
        <authorList>
            <person name="Gao Y."/>
            <person name="Hernandez V.P."/>
            <person name="Fallon A.M."/>
        </authorList>
    </citation>
    <scope>NUCLEOTIDE SEQUENCE [MRNA]</scope>
</reference>
<reference key="4">
    <citation type="submission" date="2001-06" db="EMBL/GenBank/DDBJ databases">
        <title>Defensin A protein from Aedes aegypti.</title>
        <authorList>
            <person name="Morlais I."/>
            <person name="Severson D.W."/>
        </authorList>
    </citation>
    <scope>NUCLEOTIDE SEQUENCE [GENOMIC DNA / MRNA]</scope>
    <source>
        <strain>Liverpool</strain>
        <strain>Moyo-R</strain>
        <strain>Red-eye</strain>
    </source>
</reference>
<reference key="5">
    <citation type="journal article" date="2006" name="Insect Mol. Biol.">
        <title>A novel association between clustered NF-kappaB and C/EBP binding sites is required for immune regulation of mosquito Defensin genes.</title>
        <authorList>
            <person name="Meredith J.M."/>
            <person name="Munks R.J."/>
            <person name="Grail W."/>
            <person name="Hurd H."/>
            <person name="Eggleston P."/>
            <person name="Lehane M.J."/>
        </authorList>
    </citation>
    <scope>NUCLEOTIDE SEQUENCE [GENOMIC DNA]</scope>
</reference>
<reference key="6">
    <citation type="journal article" date="2007" name="Science">
        <title>Genome sequence of Aedes aegypti, a major arbovirus vector.</title>
        <authorList>
            <person name="Nene V."/>
            <person name="Wortman J.R."/>
            <person name="Lawson D."/>
            <person name="Haas B.J."/>
            <person name="Kodira C.D."/>
            <person name="Tu Z.J."/>
            <person name="Loftus B.J."/>
            <person name="Xi Z."/>
            <person name="Megy K."/>
            <person name="Grabherr M."/>
            <person name="Ren Q."/>
            <person name="Zdobnov E.M."/>
            <person name="Lobo N.F."/>
            <person name="Campbell K.S."/>
            <person name="Brown S.E."/>
            <person name="Bonaldo M.F."/>
            <person name="Zhu J."/>
            <person name="Sinkins S.P."/>
            <person name="Hogenkamp D.G."/>
            <person name="Amedeo P."/>
            <person name="Arensburger P."/>
            <person name="Atkinson P.W."/>
            <person name="Bidwell S.L."/>
            <person name="Biedler J."/>
            <person name="Birney E."/>
            <person name="Bruggner R.V."/>
            <person name="Costas J."/>
            <person name="Coy M.R."/>
            <person name="Crabtree J."/>
            <person name="Crawford M."/>
            <person name="DeBruyn B."/>
            <person name="DeCaprio D."/>
            <person name="Eiglmeier K."/>
            <person name="Eisenstadt E."/>
            <person name="El-Dorry H."/>
            <person name="Gelbart W.M."/>
            <person name="Gomes S.L."/>
            <person name="Hammond M."/>
            <person name="Hannick L.I."/>
            <person name="Hogan J.R."/>
            <person name="Holmes M.H."/>
            <person name="Jaffe D."/>
            <person name="Johnston S.J."/>
            <person name="Kennedy R.C."/>
            <person name="Koo H."/>
            <person name="Kravitz S."/>
            <person name="Kriventseva E.V."/>
            <person name="Kulp D."/>
            <person name="Labutti K."/>
            <person name="Lee E."/>
            <person name="Li S."/>
            <person name="Lovin D.D."/>
            <person name="Mao C."/>
            <person name="Mauceli E."/>
            <person name="Menck C.F."/>
            <person name="Miller J.R."/>
            <person name="Montgomery P."/>
            <person name="Mori A."/>
            <person name="Nascimento A.L."/>
            <person name="Naveira H.F."/>
            <person name="Nusbaum C."/>
            <person name="O'Leary S.B."/>
            <person name="Orvis J."/>
            <person name="Pertea M."/>
            <person name="Quesneville H."/>
            <person name="Reidenbach K.R."/>
            <person name="Rogers Y.-H.C."/>
            <person name="Roth C.W."/>
            <person name="Schneider J.R."/>
            <person name="Schatz M."/>
            <person name="Shumway M."/>
            <person name="Stanke M."/>
            <person name="Stinson E.O."/>
            <person name="Tubio J.M.C."/>
            <person name="Vanzee J.P."/>
            <person name="Verjovski-Almeida S."/>
            <person name="Werner D."/>
            <person name="White O.R."/>
            <person name="Wyder S."/>
            <person name="Zeng Q."/>
            <person name="Zhao Q."/>
            <person name="Zhao Y."/>
            <person name="Hill C.A."/>
            <person name="Raikhel A.S."/>
            <person name="Soares M.B."/>
            <person name="Knudson D.L."/>
            <person name="Lee N.H."/>
            <person name="Galagan J."/>
            <person name="Salzberg S.L."/>
            <person name="Paulsen I.T."/>
            <person name="Dimopoulos G."/>
            <person name="Collins F.H."/>
            <person name="Bruce B."/>
            <person name="Fraser-Liggett C.M."/>
            <person name="Severson D.W."/>
        </authorList>
    </citation>
    <scope>NUCLEOTIDE SEQUENCE [LARGE SCALE GENOMIC DNA]</scope>
    <source>
        <strain>LVPib12</strain>
    </source>
</reference>
<reference key="7">
    <citation type="journal article" date="1995" name="Insect Biochem. Mol. Biol.">
        <title>Insect immunity: isolation of three novel inducible antibacterial defensins from the vector mosquito, Aedes aegypti.</title>
        <authorList>
            <person name="Lowenberger C."/>
            <person name="Bulet P."/>
            <person name="Charlet M."/>
            <person name="Hetru C."/>
            <person name="Hodgeman B."/>
            <person name="Christensen B.M."/>
            <person name="Hoffmann J.A."/>
        </authorList>
    </citation>
    <scope>PROTEIN SEQUENCE OF 59-98</scope>
    <scope>FUNCTION</scope>
    <scope>SUBCELLULAR LOCATION</scope>
    <scope>INDUCTION</scope>
    <scope>MASS SPECTROMETRY</scope>
    <source>
        <strain>Liverpool</strain>
    </source>
</reference>
<reference key="8">
    <citation type="journal article" date="1995" name="Proc. R. Soc. B">
        <title>Full sequence and characterization of two insect defensins: immune peptides from the mosquito Aedes aegypti.</title>
        <authorList>
            <person name="Chalk R."/>
            <person name="Albuquerque C.M."/>
            <person name="Ham P.J."/>
            <person name="Townson H."/>
        </authorList>
    </citation>
    <scope>PROTEIN SEQUENCE OF 59-98</scope>
    <scope>FUNCTION</scope>
    <scope>INDUCTION</scope>
    <source>
        <strain>REFM</strain>
    </source>
</reference>
<gene>
    <name type="primary">DEFA</name>
    <name type="ORF">AAEL003841</name>
</gene>
<name>DEFA_AEDAE</name>